<gene>
    <name type="ordered locus">CAB166</name>
</gene>
<name>Y166_CHLAB</name>
<protein>
    <recommendedName>
        <fullName evidence="1">Probable transcriptional regulatory protein CAB166</fullName>
    </recommendedName>
</protein>
<evidence type="ECO:0000255" key="1">
    <source>
        <dbReference type="HAMAP-Rule" id="MF_00693"/>
    </source>
</evidence>
<feature type="chain" id="PRO_0000257043" description="Probable transcriptional regulatory protein CAB166">
    <location>
        <begin position="1"/>
        <end position="238"/>
    </location>
</feature>
<keyword id="KW-0963">Cytoplasm</keyword>
<keyword id="KW-0238">DNA-binding</keyword>
<keyword id="KW-0804">Transcription</keyword>
<keyword id="KW-0805">Transcription regulation</keyword>
<dbReference type="EMBL" id="CR848038">
    <property type="protein sequence ID" value="CAH63624.1"/>
    <property type="molecule type" value="Genomic_DNA"/>
</dbReference>
<dbReference type="RefSeq" id="WP_006343832.1">
    <property type="nucleotide sequence ID" value="NC_004552.2"/>
</dbReference>
<dbReference type="SMR" id="Q5L6U7"/>
<dbReference type="KEGG" id="cab:CAB166"/>
<dbReference type="eggNOG" id="COG0217">
    <property type="taxonomic scope" value="Bacteria"/>
</dbReference>
<dbReference type="HOGENOM" id="CLU_062974_3_0_0"/>
<dbReference type="OrthoDB" id="9781053at2"/>
<dbReference type="Proteomes" id="UP000001012">
    <property type="component" value="Chromosome"/>
</dbReference>
<dbReference type="GO" id="GO:0005829">
    <property type="term" value="C:cytosol"/>
    <property type="evidence" value="ECO:0007669"/>
    <property type="project" value="TreeGrafter"/>
</dbReference>
<dbReference type="GO" id="GO:0003677">
    <property type="term" value="F:DNA binding"/>
    <property type="evidence" value="ECO:0007669"/>
    <property type="project" value="UniProtKB-UniRule"/>
</dbReference>
<dbReference type="GO" id="GO:0006355">
    <property type="term" value="P:regulation of DNA-templated transcription"/>
    <property type="evidence" value="ECO:0007669"/>
    <property type="project" value="UniProtKB-UniRule"/>
</dbReference>
<dbReference type="FunFam" id="1.10.10.200:FF:000002">
    <property type="entry name" value="Probable transcriptional regulatory protein CLM62_37755"/>
    <property type="match status" value="1"/>
</dbReference>
<dbReference type="Gene3D" id="1.10.10.200">
    <property type="match status" value="1"/>
</dbReference>
<dbReference type="Gene3D" id="3.30.70.980">
    <property type="match status" value="2"/>
</dbReference>
<dbReference type="HAMAP" id="MF_00693">
    <property type="entry name" value="Transcrip_reg_TACO1"/>
    <property type="match status" value="1"/>
</dbReference>
<dbReference type="InterPro" id="IPR017856">
    <property type="entry name" value="Integrase-like_N"/>
</dbReference>
<dbReference type="InterPro" id="IPR048300">
    <property type="entry name" value="TACO1_YebC-like_2nd/3rd_dom"/>
</dbReference>
<dbReference type="InterPro" id="IPR049083">
    <property type="entry name" value="TACO1_YebC_N"/>
</dbReference>
<dbReference type="InterPro" id="IPR002876">
    <property type="entry name" value="Transcrip_reg_TACO1-like"/>
</dbReference>
<dbReference type="InterPro" id="IPR026564">
    <property type="entry name" value="Transcrip_reg_TACO1-like_dom3"/>
</dbReference>
<dbReference type="InterPro" id="IPR029072">
    <property type="entry name" value="YebC-like"/>
</dbReference>
<dbReference type="NCBIfam" id="NF001030">
    <property type="entry name" value="PRK00110.1"/>
    <property type="match status" value="1"/>
</dbReference>
<dbReference type="NCBIfam" id="NF009044">
    <property type="entry name" value="PRK12378.1"/>
    <property type="match status" value="1"/>
</dbReference>
<dbReference type="NCBIfam" id="TIGR01033">
    <property type="entry name" value="YebC/PmpR family DNA-binding transcriptional regulator"/>
    <property type="match status" value="1"/>
</dbReference>
<dbReference type="PANTHER" id="PTHR12532:SF6">
    <property type="entry name" value="TRANSCRIPTIONAL REGULATORY PROTEIN YEBC-RELATED"/>
    <property type="match status" value="1"/>
</dbReference>
<dbReference type="PANTHER" id="PTHR12532">
    <property type="entry name" value="TRANSLATIONAL ACTIVATOR OF CYTOCHROME C OXIDASE 1"/>
    <property type="match status" value="1"/>
</dbReference>
<dbReference type="Pfam" id="PF20772">
    <property type="entry name" value="TACO1_YebC_N"/>
    <property type="match status" value="1"/>
</dbReference>
<dbReference type="Pfam" id="PF01709">
    <property type="entry name" value="Transcrip_reg"/>
    <property type="match status" value="1"/>
</dbReference>
<dbReference type="SUPFAM" id="SSF75625">
    <property type="entry name" value="YebC-like"/>
    <property type="match status" value="1"/>
</dbReference>
<organism>
    <name type="scientific">Chlamydia abortus (strain DSM 27085 / S26/3)</name>
    <name type="common">Chlamydophila abortus</name>
    <dbReference type="NCBI Taxonomy" id="218497"/>
    <lineage>
        <taxon>Bacteria</taxon>
        <taxon>Pseudomonadati</taxon>
        <taxon>Chlamydiota</taxon>
        <taxon>Chlamydiia</taxon>
        <taxon>Chlamydiales</taxon>
        <taxon>Chlamydiaceae</taxon>
        <taxon>Chlamydia/Chlamydophila group</taxon>
        <taxon>Chlamydia</taxon>
    </lineage>
</organism>
<comment type="subcellular location">
    <subcellularLocation>
        <location evidence="1">Cytoplasm</location>
    </subcellularLocation>
</comment>
<comment type="similarity">
    <text evidence="1">Belongs to the TACO1 family.</text>
</comment>
<reference key="1">
    <citation type="journal article" date="2005" name="Genome Res.">
        <title>The Chlamydophila abortus genome sequence reveals an array of variable proteins that contribute to interspecies variation.</title>
        <authorList>
            <person name="Thomson N.R."/>
            <person name="Yeats C."/>
            <person name="Bell K."/>
            <person name="Holden M.T.G."/>
            <person name="Bentley S.D."/>
            <person name="Livingstone M."/>
            <person name="Cerdeno-Tarraga A.-M."/>
            <person name="Harris B."/>
            <person name="Doggett J."/>
            <person name="Ormond D."/>
            <person name="Mungall K."/>
            <person name="Clarke K."/>
            <person name="Feltwell T."/>
            <person name="Hance Z."/>
            <person name="Sanders M."/>
            <person name="Quail M.A."/>
            <person name="Price C."/>
            <person name="Barrell B.G."/>
            <person name="Parkhill J."/>
            <person name="Longbottom D."/>
        </authorList>
    </citation>
    <scope>NUCLEOTIDE SEQUENCE [LARGE SCALE GENOMIC DNA]</scope>
    <source>
        <strain>DSM 27085 / S26/3</strain>
    </source>
</reference>
<proteinExistence type="inferred from homology"/>
<sequence>MAGHSKWANTKYRKERADHKRGKIFSRTIKELMAAVKMGGPDPKTNARLRMIIQKAKDQNIPNENIERNLKKATSADQKNFENVTYELYGHGGVGIIVEAMTDNKNRTASDMRIAVNKRGGSLVEPGSVLYNFVRKGACYVPKSSIDEAVLLPHVIDVGAEDLDNDDDEHFLVLCDPVELASVKEKLTALGVACSEEKLIYVPLRLVDCDEQDGEANLALIEWLEKIDDVDEVYHNMA</sequence>
<accession>Q5L6U7</accession>